<protein>
    <recommendedName>
        <fullName evidence="1">Putative pyruvate, phosphate dikinase regulatory protein</fullName>
        <shortName evidence="1">PPDK regulatory protein</shortName>
        <ecNumber evidence="1">2.7.11.32</ecNumber>
        <ecNumber evidence="1">2.7.4.27</ecNumber>
    </recommendedName>
</protein>
<evidence type="ECO:0000255" key="1">
    <source>
        <dbReference type="HAMAP-Rule" id="MF_00921"/>
    </source>
</evidence>
<feature type="chain" id="PRO_1000084479" description="Putative pyruvate, phosphate dikinase regulatory protein">
    <location>
        <begin position="1"/>
        <end position="272"/>
    </location>
</feature>
<feature type="binding site" evidence="1">
    <location>
        <begin position="151"/>
        <end position="158"/>
    </location>
    <ligand>
        <name>ADP</name>
        <dbReference type="ChEBI" id="CHEBI:456216"/>
    </ligand>
</feature>
<name>PDRP_STAAT</name>
<gene>
    <name type="ordered locus">USA300HOU_1565</name>
</gene>
<proteinExistence type="inferred from homology"/>
<dbReference type="EC" id="2.7.11.32" evidence="1"/>
<dbReference type="EC" id="2.7.4.27" evidence="1"/>
<dbReference type="EMBL" id="CP000730">
    <property type="protein sequence ID" value="ABX29572.1"/>
    <property type="molecule type" value="Genomic_DNA"/>
</dbReference>
<dbReference type="RefSeq" id="WP_000411299.1">
    <property type="nucleotide sequence ID" value="NC_010079.1"/>
</dbReference>
<dbReference type="SMR" id="A8Z4A3"/>
<dbReference type="KEGG" id="sax:USA300HOU_1565"/>
<dbReference type="HOGENOM" id="CLU_046206_2_1_9"/>
<dbReference type="BioCyc" id="SAUR451516-HMP:GTV5-1584-MONOMER"/>
<dbReference type="GO" id="GO:0043531">
    <property type="term" value="F:ADP binding"/>
    <property type="evidence" value="ECO:0007669"/>
    <property type="project" value="UniProtKB-UniRule"/>
</dbReference>
<dbReference type="GO" id="GO:0005524">
    <property type="term" value="F:ATP binding"/>
    <property type="evidence" value="ECO:0007669"/>
    <property type="project" value="InterPro"/>
</dbReference>
<dbReference type="GO" id="GO:0016776">
    <property type="term" value="F:phosphotransferase activity, phosphate group as acceptor"/>
    <property type="evidence" value="ECO:0007669"/>
    <property type="project" value="UniProtKB-UniRule"/>
</dbReference>
<dbReference type="GO" id="GO:0004674">
    <property type="term" value="F:protein serine/threonine kinase activity"/>
    <property type="evidence" value="ECO:0007669"/>
    <property type="project" value="UniProtKB-UniRule"/>
</dbReference>
<dbReference type="HAMAP" id="MF_00921">
    <property type="entry name" value="PDRP"/>
    <property type="match status" value="1"/>
</dbReference>
<dbReference type="InterPro" id="IPR005177">
    <property type="entry name" value="Kinase-pyrophosphorylase"/>
</dbReference>
<dbReference type="InterPro" id="IPR026565">
    <property type="entry name" value="PPDK_reg"/>
</dbReference>
<dbReference type="NCBIfam" id="NF003742">
    <property type="entry name" value="PRK05339.1"/>
    <property type="match status" value="1"/>
</dbReference>
<dbReference type="PANTHER" id="PTHR31756">
    <property type="entry name" value="PYRUVATE, PHOSPHATE DIKINASE REGULATORY PROTEIN 1, CHLOROPLASTIC"/>
    <property type="match status" value="1"/>
</dbReference>
<dbReference type="PANTHER" id="PTHR31756:SF3">
    <property type="entry name" value="PYRUVATE, PHOSPHATE DIKINASE REGULATORY PROTEIN 1, CHLOROPLASTIC"/>
    <property type="match status" value="1"/>
</dbReference>
<dbReference type="Pfam" id="PF03618">
    <property type="entry name" value="Kinase-PPPase"/>
    <property type="match status" value="1"/>
</dbReference>
<accession>A8Z4A3</accession>
<reference key="1">
    <citation type="journal article" date="2007" name="BMC Microbiol.">
        <title>Subtle genetic changes enhance virulence of methicillin resistant and sensitive Staphylococcus aureus.</title>
        <authorList>
            <person name="Highlander S.K."/>
            <person name="Hulten K.G."/>
            <person name="Qin X."/>
            <person name="Jiang H."/>
            <person name="Yerrapragada S."/>
            <person name="Mason E.O. Jr."/>
            <person name="Shang Y."/>
            <person name="Williams T.M."/>
            <person name="Fortunov R.M."/>
            <person name="Liu Y."/>
            <person name="Igboeli O."/>
            <person name="Petrosino J."/>
            <person name="Tirumalai M."/>
            <person name="Uzman A."/>
            <person name="Fox G.E."/>
            <person name="Cardenas A.M."/>
            <person name="Muzny D.M."/>
            <person name="Hemphill L."/>
            <person name="Ding Y."/>
            <person name="Dugan S."/>
            <person name="Blyth P.R."/>
            <person name="Buhay C.J."/>
            <person name="Dinh H.H."/>
            <person name="Hawes A.C."/>
            <person name="Holder M."/>
            <person name="Kovar C.L."/>
            <person name="Lee S.L."/>
            <person name="Liu W."/>
            <person name="Nazareth L.V."/>
            <person name="Wang Q."/>
            <person name="Zhou J."/>
            <person name="Kaplan S.L."/>
            <person name="Weinstock G.M."/>
        </authorList>
    </citation>
    <scope>NUCLEOTIDE SEQUENCE [LARGE SCALE GENOMIC DNA]</scope>
    <source>
        <strain>USA300 / TCH1516</strain>
    </source>
</reference>
<sequence length="272" mass="30784">MEKIKIIVASDSIGETAELVARAGISQFNPKQCKNELLRYPYIESFEDVDEVIQVAKDTNAIIVYTLIKPEMKQYMSEKVAEFQLKSVDIMGPLMDLLSASVEEKPYNEPGIVHRLDDAYFKKIDAIEFAVKYDDGKDPKGLPKADIVLLGISRTSKTPLSQYLAHKSYKVMNVPIVPEVTPPDGLYDINPKKCIALKISEEKLNRIRKERLKQLGLGDTARYATEARIQEELNYFEEIVSEIGCPVIDVSQKAIEETANDIIHYIEQNKSK</sequence>
<comment type="function">
    <text evidence="1">Bifunctional serine/threonine kinase and phosphorylase involved in the regulation of the pyruvate, phosphate dikinase (PPDK) by catalyzing its phosphorylation/dephosphorylation.</text>
</comment>
<comment type="catalytic activity">
    <reaction evidence="1">
        <text>N(tele)-phospho-L-histidyl/L-threonyl-[pyruvate, phosphate dikinase] + ADP = N(tele)-phospho-L-histidyl/O-phospho-L-threonyl-[pyruvate, phosphate dikinase] + AMP + H(+)</text>
        <dbReference type="Rhea" id="RHEA:43692"/>
        <dbReference type="Rhea" id="RHEA-COMP:10650"/>
        <dbReference type="Rhea" id="RHEA-COMP:10651"/>
        <dbReference type="ChEBI" id="CHEBI:15378"/>
        <dbReference type="ChEBI" id="CHEBI:30013"/>
        <dbReference type="ChEBI" id="CHEBI:61977"/>
        <dbReference type="ChEBI" id="CHEBI:83586"/>
        <dbReference type="ChEBI" id="CHEBI:456215"/>
        <dbReference type="ChEBI" id="CHEBI:456216"/>
        <dbReference type="EC" id="2.7.11.32"/>
    </reaction>
</comment>
<comment type="catalytic activity">
    <reaction evidence="1">
        <text>N(tele)-phospho-L-histidyl/O-phospho-L-threonyl-[pyruvate, phosphate dikinase] + phosphate + H(+) = N(tele)-phospho-L-histidyl/L-threonyl-[pyruvate, phosphate dikinase] + diphosphate</text>
        <dbReference type="Rhea" id="RHEA:43696"/>
        <dbReference type="Rhea" id="RHEA-COMP:10650"/>
        <dbReference type="Rhea" id="RHEA-COMP:10651"/>
        <dbReference type="ChEBI" id="CHEBI:15378"/>
        <dbReference type="ChEBI" id="CHEBI:30013"/>
        <dbReference type="ChEBI" id="CHEBI:33019"/>
        <dbReference type="ChEBI" id="CHEBI:43474"/>
        <dbReference type="ChEBI" id="CHEBI:61977"/>
        <dbReference type="ChEBI" id="CHEBI:83586"/>
        <dbReference type="EC" id="2.7.4.27"/>
    </reaction>
</comment>
<comment type="similarity">
    <text evidence="1">Belongs to the pyruvate, phosphate/water dikinase regulatory protein family. PDRP subfamily.</text>
</comment>
<organism>
    <name type="scientific">Staphylococcus aureus (strain USA300 / TCH1516)</name>
    <dbReference type="NCBI Taxonomy" id="451516"/>
    <lineage>
        <taxon>Bacteria</taxon>
        <taxon>Bacillati</taxon>
        <taxon>Bacillota</taxon>
        <taxon>Bacilli</taxon>
        <taxon>Bacillales</taxon>
        <taxon>Staphylococcaceae</taxon>
        <taxon>Staphylococcus</taxon>
    </lineage>
</organism>
<keyword id="KW-0418">Kinase</keyword>
<keyword id="KW-0547">Nucleotide-binding</keyword>
<keyword id="KW-0723">Serine/threonine-protein kinase</keyword>
<keyword id="KW-0808">Transferase</keyword>